<dbReference type="EMBL" id="CM001232">
    <property type="protein sequence ID" value="EHA54068.1"/>
    <property type="molecule type" value="Genomic_DNA"/>
</dbReference>
<dbReference type="RefSeq" id="XP_003713875.1">
    <property type="nucleotide sequence ID" value="XM_003713827.1"/>
</dbReference>
<dbReference type="SMR" id="A4RM19"/>
<dbReference type="FunCoup" id="A4RM19">
    <property type="interactions" value="69"/>
</dbReference>
<dbReference type="STRING" id="242507.A4RM19"/>
<dbReference type="EnsemblFungi" id="MGG_08853T0">
    <property type="protein sequence ID" value="MGG_08853T0"/>
    <property type="gene ID" value="MGG_08853"/>
</dbReference>
<dbReference type="GeneID" id="2679839"/>
<dbReference type="KEGG" id="mgr:MGG_08853"/>
<dbReference type="VEuPathDB" id="FungiDB:MGG_08853"/>
<dbReference type="eggNOG" id="ENOG502QUUW">
    <property type="taxonomic scope" value="Eukaryota"/>
</dbReference>
<dbReference type="HOGENOM" id="CLU_032730_1_0_1"/>
<dbReference type="InParanoid" id="A4RM19"/>
<dbReference type="OMA" id="WSFTQGL"/>
<dbReference type="OrthoDB" id="5599157at2759"/>
<dbReference type="Proteomes" id="UP000009058">
    <property type="component" value="Chromosome 2"/>
</dbReference>
<dbReference type="GO" id="GO:0005789">
    <property type="term" value="C:endoplasmic reticulum membrane"/>
    <property type="evidence" value="ECO:0007669"/>
    <property type="project" value="UniProtKB-SubCell"/>
</dbReference>
<dbReference type="GO" id="GO:0032865">
    <property type="term" value="C:ERMES complex"/>
    <property type="evidence" value="ECO:0007669"/>
    <property type="project" value="UniProtKB-UniRule"/>
</dbReference>
<dbReference type="GO" id="GO:0005741">
    <property type="term" value="C:mitochondrial outer membrane"/>
    <property type="evidence" value="ECO:0000250"/>
    <property type="project" value="PAMGO_MGG"/>
</dbReference>
<dbReference type="GO" id="GO:0005739">
    <property type="term" value="C:mitochondrion"/>
    <property type="evidence" value="ECO:0000250"/>
    <property type="project" value="PAMGO_MGG"/>
</dbReference>
<dbReference type="GO" id="GO:0008289">
    <property type="term" value="F:lipid binding"/>
    <property type="evidence" value="ECO:0007669"/>
    <property type="project" value="UniProtKB-KW"/>
</dbReference>
<dbReference type="GO" id="GO:0120013">
    <property type="term" value="F:lipid transfer activity"/>
    <property type="evidence" value="ECO:0007669"/>
    <property type="project" value="EnsemblFungi"/>
</dbReference>
<dbReference type="GO" id="GO:0015917">
    <property type="term" value="P:aminophospholipid transport"/>
    <property type="evidence" value="ECO:0007669"/>
    <property type="project" value="EnsemblFungi"/>
</dbReference>
<dbReference type="GO" id="GO:0000002">
    <property type="term" value="P:mitochondrial genome maintenance"/>
    <property type="evidence" value="ECO:0000250"/>
    <property type="project" value="PAMGO_MGG"/>
</dbReference>
<dbReference type="GO" id="GO:0070096">
    <property type="term" value="P:mitochondrial outer membrane translocase complex assembly"/>
    <property type="evidence" value="ECO:0007669"/>
    <property type="project" value="EnsemblFungi"/>
</dbReference>
<dbReference type="GO" id="GO:0007005">
    <property type="term" value="P:mitochondrion organization"/>
    <property type="evidence" value="ECO:0000250"/>
    <property type="project" value="PAMGO_MGG"/>
</dbReference>
<dbReference type="GO" id="GO:1990456">
    <property type="term" value="P:mitochondrion-endoplasmic reticulum membrane tethering"/>
    <property type="evidence" value="ECO:0007669"/>
    <property type="project" value="EnsemblFungi"/>
</dbReference>
<dbReference type="GO" id="GO:0045040">
    <property type="term" value="P:protein insertion into mitochondrial outer membrane"/>
    <property type="evidence" value="ECO:0007669"/>
    <property type="project" value="UniProtKB-UniRule"/>
</dbReference>
<dbReference type="GO" id="GO:0000723">
    <property type="term" value="P:telomere maintenance"/>
    <property type="evidence" value="ECO:0000250"/>
    <property type="project" value="PAMGO_MGG"/>
</dbReference>
<dbReference type="CDD" id="cd21671">
    <property type="entry name" value="SMP_Mmm1"/>
    <property type="match status" value="1"/>
</dbReference>
<dbReference type="HAMAP" id="MF_03103">
    <property type="entry name" value="Mmm1"/>
    <property type="match status" value="1"/>
</dbReference>
<dbReference type="InterPro" id="IPR027537">
    <property type="entry name" value="Mmm1"/>
</dbReference>
<dbReference type="InterPro" id="IPR019411">
    <property type="entry name" value="MMM1_dom"/>
</dbReference>
<dbReference type="InterPro" id="IPR031468">
    <property type="entry name" value="SMP_LBD"/>
</dbReference>
<dbReference type="PANTHER" id="PTHR13466:SF0">
    <property type="entry name" value="SMP-LTD DOMAIN-CONTAINING PROTEIN"/>
    <property type="match status" value="1"/>
</dbReference>
<dbReference type="PANTHER" id="PTHR13466">
    <property type="entry name" value="TEX2 PROTEIN-RELATED"/>
    <property type="match status" value="1"/>
</dbReference>
<dbReference type="Pfam" id="PF10296">
    <property type="entry name" value="MMM1"/>
    <property type="match status" value="1"/>
</dbReference>
<dbReference type="PROSITE" id="PS51847">
    <property type="entry name" value="SMP"/>
    <property type="match status" value="1"/>
</dbReference>
<name>MMM1_PYRO7</name>
<accession>A4RM19</accession>
<accession>G4MV53</accession>
<gene>
    <name evidence="1" type="primary">MMM1</name>
    <name type="ORF">MGG_08853</name>
</gene>
<reference key="1">
    <citation type="journal article" date="2005" name="Nature">
        <title>The genome sequence of the rice blast fungus Magnaporthe grisea.</title>
        <authorList>
            <person name="Dean R.A."/>
            <person name="Talbot N.J."/>
            <person name="Ebbole D.J."/>
            <person name="Farman M.L."/>
            <person name="Mitchell T.K."/>
            <person name="Orbach M.J."/>
            <person name="Thon M.R."/>
            <person name="Kulkarni R."/>
            <person name="Xu J.-R."/>
            <person name="Pan H."/>
            <person name="Read N.D."/>
            <person name="Lee Y.-H."/>
            <person name="Carbone I."/>
            <person name="Brown D."/>
            <person name="Oh Y.Y."/>
            <person name="Donofrio N."/>
            <person name="Jeong J.S."/>
            <person name="Soanes D.M."/>
            <person name="Djonovic S."/>
            <person name="Kolomiets E."/>
            <person name="Rehmeyer C."/>
            <person name="Li W."/>
            <person name="Harding M."/>
            <person name="Kim S."/>
            <person name="Lebrun M.-H."/>
            <person name="Bohnert H."/>
            <person name="Coughlan S."/>
            <person name="Butler J."/>
            <person name="Calvo S.E."/>
            <person name="Ma L.-J."/>
            <person name="Nicol R."/>
            <person name="Purcell S."/>
            <person name="Nusbaum C."/>
            <person name="Galagan J.E."/>
            <person name="Birren B.W."/>
        </authorList>
    </citation>
    <scope>NUCLEOTIDE SEQUENCE [LARGE SCALE GENOMIC DNA]</scope>
    <source>
        <strain>70-15 / ATCC MYA-4617 / FGSC 8958</strain>
    </source>
</reference>
<protein>
    <recommendedName>
        <fullName evidence="1">Maintenance of mitochondrial morphology protein 1</fullName>
    </recommendedName>
</protein>
<feature type="chain" id="PRO_0000384235" description="Maintenance of mitochondrial morphology protein 1">
    <location>
        <begin position="1"/>
        <end position="410"/>
    </location>
</feature>
<feature type="topological domain" description="Lumenal" evidence="1">
    <location>
        <begin position="1"/>
        <end position="19"/>
    </location>
</feature>
<feature type="transmembrane region" description="Helical" evidence="1">
    <location>
        <begin position="20"/>
        <end position="40"/>
    </location>
</feature>
<feature type="topological domain" description="Cytoplasmic" evidence="1">
    <location>
        <begin position="41"/>
        <end position="410"/>
    </location>
</feature>
<feature type="domain" description="SMP-LTD" evidence="1">
    <location>
        <begin position="119"/>
        <end position="335"/>
    </location>
</feature>
<feature type="region of interest" description="Disordered" evidence="2">
    <location>
        <begin position="71"/>
        <end position="98"/>
    </location>
</feature>
<feature type="region of interest" description="Disordered" evidence="2">
    <location>
        <begin position="380"/>
        <end position="410"/>
    </location>
</feature>
<feature type="compositionally biased region" description="Polar residues" evidence="2">
    <location>
        <begin position="71"/>
        <end position="87"/>
    </location>
</feature>
<feature type="compositionally biased region" description="Basic and acidic residues" evidence="2">
    <location>
        <begin position="387"/>
        <end position="398"/>
    </location>
</feature>
<keyword id="KW-0256">Endoplasmic reticulum</keyword>
<keyword id="KW-0445">Lipid transport</keyword>
<keyword id="KW-0446">Lipid-binding</keyword>
<keyword id="KW-0472">Membrane</keyword>
<keyword id="KW-1185">Reference proteome</keyword>
<keyword id="KW-0812">Transmembrane</keyword>
<keyword id="KW-1133">Transmembrane helix</keyword>
<keyword id="KW-0813">Transport</keyword>
<comment type="function">
    <text evidence="1">Component of the ERMES/MDM complex, which serves as a molecular tether to connect the endoplasmic reticulum (ER) and mitochondria. Components of this complex are involved in the control of mitochondrial shape and protein biogenesis, and function in nonvesicular lipid trafficking between the ER and mitochondria. The MDM12-MMM1 subcomplex functions in the major beta-barrel assembly pathway that is responsible for biogenesis of all outer membrane beta-barrel proteins, and acts in a late step after the SAM complex. The MDM10-MDM12-MMM1 subcomplex further acts in the TOM40-specific pathway after the action of the MDM12-MMM1 complex. Essential for establishing and maintaining the structure of mitochondria and maintenance of mtDNA nucleoids.</text>
</comment>
<comment type="subunit">
    <text evidence="1">Homodimer. Component of the ER-mitochondria encounter structure (ERMES) or MDM complex, composed of MMM1, MDM10, MDM12 and MDM34. A MMM1 homodimer associates with one molecule of MDM12 on each side in a pairwise head-to-tail manner, and the SMP-LTD domains of MMM1 and MDM12 generate a continuous hydrophobic tunnel for phospholipid trafficking.</text>
</comment>
<comment type="subcellular location">
    <subcellularLocation>
        <location evidence="1">Endoplasmic reticulum membrane</location>
        <topology evidence="1">Single-pass type I membrane protein</topology>
    </subcellularLocation>
    <text evidence="1">The ERMES/MDM complex localizes to a few discrete foci (around 10 per single cell), that represent mitochondria-endoplasmic reticulum junctions. These foci are often found next to mtDNA nucleoids.</text>
</comment>
<comment type="domain">
    <text evidence="1">The SMP-LTD domain is a barrel-like domain that can bind various types of glycerophospholipids in its interior and mediate their transfer between two adjacent bilayers.</text>
</comment>
<comment type="similarity">
    <text evidence="1">Belongs to the MMM1 family.</text>
</comment>
<proteinExistence type="inferred from homology"/>
<evidence type="ECO:0000255" key="1">
    <source>
        <dbReference type="HAMAP-Rule" id="MF_03103"/>
    </source>
</evidence>
<evidence type="ECO:0000256" key="2">
    <source>
        <dbReference type="SAM" id="MobiDB-lite"/>
    </source>
</evidence>
<organism>
    <name type="scientific">Pyricularia oryzae (strain 70-15 / ATCC MYA-4617 / FGSC 8958)</name>
    <name type="common">Rice blast fungus</name>
    <name type="synonym">Magnaporthe oryzae</name>
    <dbReference type="NCBI Taxonomy" id="242507"/>
    <lineage>
        <taxon>Eukaryota</taxon>
        <taxon>Fungi</taxon>
        <taxon>Dikarya</taxon>
        <taxon>Ascomycota</taxon>
        <taxon>Pezizomycotina</taxon>
        <taxon>Sordariomycetes</taxon>
        <taxon>Sordariomycetidae</taxon>
        <taxon>Magnaporthales</taxon>
        <taxon>Pyriculariaceae</taxon>
        <taxon>Pyricularia</taxon>
    </lineage>
</organism>
<sequence length="410" mass="45654">MTPDSCPVRPEPTLSFTQGLIVGQISVVFLIAAFIKFFIFGDPPSAEETASLRASERRSRTLAHKKSLLSLRTSNQRPGSQQQQSVLNRKKSSILRSGPPSLTIGSILNKTYYRVESHQPESLDWFNVLVAQTIAQFRSDAQHDDAILTSLTKALNGTSRPSFLDEIRVTELSLGEDFPIFSNCRIIPVDEDGLDFGPGKAFDANMATRDGGTLQARMDVDLSDMITLALETKLLLNYPKKLTAVLPVALAVSVVRFSGTLAISFIPSNPSQSTPTKMVFNFLDDYRLDFSIRSLVGSRSRLQDVPKIAQLVESRLHRWFDERCVEPRFQEIPLPSMWPRKKNARGGDDAIADVERSMSKAKGADVARDLRREVLVEAEARQAAQRDSLRYRRPRADDAFPMPGSLAVDD</sequence>